<protein>
    <recommendedName>
        <fullName evidence="1">ATP-dependent Clp protease proteolytic subunit 2</fullName>
        <ecNumber evidence="1">3.4.21.92</ecNumber>
    </recommendedName>
    <alternativeName>
        <fullName evidence="1">Endopeptidase Clp 2</fullName>
    </alternativeName>
</protein>
<name>CLPP2_CHLTR</name>
<proteinExistence type="evidence at protein level"/>
<accession>O84712</accession>
<gene>
    <name evidence="1" type="primary">clpP2</name>
    <name type="ordered locus">CT_706</name>
</gene>
<evidence type="ECO:0000255" key="1">
    <source>
        <dbReference type="HAMAP-Rule" id="MF_00444"/>
    </source>
</evidence>
<evidence type="ECO:0007829" key="2">
    <source>
        <dbReference type="PDB" id="6X60"/>
    </source>
</evidence>
<keyword id="KW-0002">3D-structure</keyword>
<keyword id="KW-0963">Cytoplasm</keyword>
<keyword id="KW-0378">Hydrolase</keyword>
<keyword id="KW-0645">Protease</keyword>
<keyword id="KW-1185">Reference proteome</keyword>
<keyword id="KW-0720">Serine protease</keyword>
<organism>
    <name type="scientific">Chlamydia trachomatis serovar D (strain ATCC VR-885 / DSM 19411 / UW-3/Cx)</name>
    <dbReference type="NCBI Taxonomy" id="272561"/>
    <lineage>
        <taxon>Bacteria</taxon>
        <taxon>Pseudomonadati</taxon>
        <taxon>Chlamydiota</taxon>
        <taxon>Chlamydiia</taxon>
        <taxon>Chlamydiales</taxon>
        <taxon>Chlamydiaceae</taxon>
        <taxon>Chlamydia/Chlamydophila group</taxon>
        <taxon>Chlamydia</taxon>
    </lineage>
</organism>
<comment type="function">
    <text evidence="1">Cleaves peptides in various proteins in a process that requires ATP hydrolysis. Has a chymotrypsin-like activity. Plays a major role in the degradation of misfolded proteins.</text>
</comment>
<comment type="catalytic activity">
    <reaction evidence="1">
        <text>Hydrolysis of proteins to small peptides in the presence of ATP and magnesium. alpha-casein is the usual test substrate. In the absence of ATP, only oligopeptides shorter than five residues are hydrolyzed (such as succinyl-Leu-Tyr-|-NHMec, and Leu-Tyr-Leu-|-Tyr-Trp, in which cleavage of the -Tyr-|-Leu- and -Tyr-|-Trp bonds also occurs).</text>
        <dbReference type="EC" id="3.4.21.92"/>
    </reaction>
</comment>
<comment type="subunit">
    <text evidence="1">Fourteen ClpP subunits assemble into 2 heptameric rings which stack back to back to give a disk-like structure with a central cavity, resembling the structure of eukaryotic proteasomes.</text>
</comment>
<comment type="subcellular location">
    <subcellularLocation>
        <location evidence="1">Cytoplasm</location>
    </subcellularLocation>
</comment>
<comment type="similarity">
    <text evidence="1">Belongs to the peptidase S14 family.</text>
</comment>
<dbReference type="EC" id="3.4.21.92" evidence="1"/>
<dbReference type="EMBL" id="AE001273">
    <property type="protein sequence ID" value="AAC68301.1"/>
    <property type="molecule type" value="Genomic_DNA"/>
</dbReference>
<dbReference type="PIR" id="C71481">
    <property type="entry name" value="C71481"/>
</dbReference>
<dbReference type="RefSeq" id="WP_009872081.1">
    <property type="nucleotide sequence ID" value="NC_000117.1"/>
</dbReference>
<dbReference type="PDB" id="6X60">
    <property type="method" value="X-ray"/>
    <property type="resolution" value="2.81 A"/>
    <property type="chains" value="A/B/C/D/E/F/G=1-203"/>
</dbReference>
<dbReference type="PDBsum" id="6X60"/>
<dbReference type="SMR" id="O84712"/>
<dbReference type="FunCoup" id="O84712">
    <property type="interactions" value="238"/>
</dbReference>
<dbReference type="STRING" id="272561.CT_706"/>
<dbReference type="MEROPS" id="S14.001"/>
<dbReference type="EnsemblBacteria" id="AAC68301">
    <property type="protein sequence ID" value="AAC68301"/>
    <property type="gene ID" value="CT_706"/>
</dbReference>
<dbReference type="KEGG" id="ctr:CT_706"/>
<dbReference type="PATRIC" id="fig|272561.5.peg.777"/>
<dbReference type="HOGENOM" id="CLU_058707_3_2_0"/>
<dbReference type="InParanoid" id="O84712"/>
<dbReference type="OrthoDB" id="9802800at2"/>
<dbReference type="Proteomes" id="UP000000431">
    <property type="component" value="Chromosome"/>
</dbReference>
<dbReference type="GO" id="GO:0005737">
    <property type="term" value="C:cytoplasm"/>
    <property type="evidence" value="ECO:0007669"/>
    <property type="project" value="UniProtKB-SubCell"/>
</dbReference>
<dbReference type="GO" id="GO:0009368">
    <property type="term" value="C:endopeptidase Clp complex"/>
    <property type="evidence" value="ECO:0000318"/>
    <property type="project" value="GO_Central"/>
</dbReference>
<dbReference type="GO" id="GO:0004176">
    <property type="term" value="F:ATP-dependent peptidase activity"/>
    <property type="evidence" value="ECO:0000318"/>
    <property type="project" value="GO_Central"/>
</dbReference>
<dbReference type="GO" id="GO:0051117">
    <property type="term" value="F:ATPase binding"/>
    <property type="evidence" value="ECO:0000318"/>
    <property type="project" value="GO_Central"/>
</dbReference>
<dbReference type="GO" id="GO:0004252">
    <property type="term" value="F:serine-type endopeptidase activity"/>
    <property type="evidence" value="ECO:0000318"/>
    <property type="project" value="GO_Central"/>
</dbReference>
<dbReference type="GO" id="GO:0006515">
    <property type="term" value="P:protein quality control for misfolded or incompletely synthesized proteins"/>
    <property type="evidence" value="ECO:0000318"/>
    <property type="project" value="GO_Central"/>
</dbReference>
<dbReference type="CDD" id="cd07017">
    <property type="entry name" value="S14_ClpP_2"/>
    <property type="match status" value="1"/>
</dbReference>
<dbReference type="FunFam" id="3.90.226.10:FF:000001">
    <property type="entry name" value="ATP-dependent Clp protease proteolytic subunit"/>
    <property type="match status" value="1"/>
</dbReference>
<dbReference type="Gene3D" id="3.90.226.10">
    <property type="entry name" value="2-enoyl-CoA Hydratase, Chain A, domain 1"/>
    <property type="match status" value="1"/>
</dbReference>
<dbReference type="HAMAP" id="MF_00444">
    <property type="entry name" value="ClpP"/>
    <property type="match status" value="1"/>
</dbReference>
<dbReference type="InterPro" id="IPR001907">
    <property type="entry name" value="ClpP"/>
</dbReference>
<dbReference type="InterPro" id="IPR029045">
    <property type="entry name" value="ClpP/crotonase-like_dom_sf"/>
</dbReference>
<dbReference type="InterPro" id="IPR023562">
    <property type="entry name" value="ClpP/TepA"/>
</dbReference>
<dbReference type="InterPro" id="IPR033135">
    <property type="entry name" value="ClpP_His_AS"/>
</dbReference>
<dbReference type="InterPro" id="IPR018215">
    <property type="entry name" value="ClpP_Ser_AS"/>
</dbReference>
<dbReference type="NCBIfam" id="NF001368">
    <property type="entry name" value="PRK00277.1"/>
    <property type="match status" value="1"/>
</dbReference>
<dbReference type="NCBIfam" id="NF009205">
    <property type="entry name" value="PRK12553.1"/>
    <property type="match status" value="1"/>
</dbReference>
<dbReference type="PANTHER" id="PTHR10381">
    <property type="entry name" value="ATP-DEPENDENT CLP PROTEASE PROTEOLYTIC SUBUNIT"/>
    <property type="match status" value="1"/>
</dbReference>
<dbReference type="PANTHER" id="PTHR10381:SF70">
    <property type="entry name" value="ATP-DEPENDENT CLP PROTEASE PROTEOLYTIC SUBUNIT"/>
    <property type="match status" value="1"/>
</dbReference>
<dbReference type="Pfam" id="PF00574">
    <property type="entry name" value="CLP_protease"/>
    <property type="match status" value="1"/>
</dbReference>
<dbReference type="PRINTS" id="PR00127">
    <property type="entry name" value="CLPPROTEASEP"/>
</dbReference>
<dbReference type="SUPFAM" id="SSF52096">
    <property type="entry name" value="ClpP/crotonase"/>
    <property type="match status" value="1"/>
</dbReference>
<dbReference type="PROSITE" id="PS00382">
    <property type="entry name" value="CLP_PROTEASE_HIS"/>
    <property type="match status" value="1"/>
</dbReference>
<dbReference type="PROSITE" id="PS00381">
    <property type="entry name" value="CLP_PROTEASE_SER"/>
    <property type="match status" value="1"/>
</dbReference>
<sequence length="203" mass="22049">MTLVPYVVEDTGRGERAMDIYSRLLKDRIVMIGQEITEPLANTVIAQLLFLMSEDPTKDIQIFINSPGGYITAGLAIYDTIRFLGCDVNTYCIGQAASMGALLLSAGTKGKRYALPHSRMMIHQPSGGIIGTSADIQLQAAEILTLKKHLSNILAECTGQSVEKIIEDSERDFFMGAEEAIAYGLIDKVISSAKETKDKSIAS</sequence>
<feature type="chain" id="PRO_0000179536" description="ATP-dependent Clp protease proteolytic subunit 2">
    <location>
        <begin position="1"/>
        <end position="203"/>
    </location>
</feature>
<feature type="active site" description="Nucleophile" evidence="1">
    <location>
        <position position="98"/>
    </location>
</feature>
<feature type="active site" evidence="1">
    <location>
        <position position="123"/>
    </location>
</feature>
<feature type="helix" evidence="2">
    <location>
        <begin position="20"/>
        <end position="26"/>
    </location>
</feature>
<feature type="strand" evidence="2">
    <location>
        <begin position="29"/>
        <end position="32"/>
    </location>
</feature>
<feature type="helix" evidence="2">
    <location>
        <begin position="38"/>
        <end position="54"/>
    </location>
</feature>
<feature type="strand" evidence="2">
    <location>
        <begin position="56"/>
        <end position="58"/>
    </location>
</feature>
<feature type="strand" evidence="2">
    <location>
        <begin position="60"/>
        <end position="66"/>
    </location>
</feature>
<feature type="helix" evidence="2">
    <location>
        <begin position="71"/>
        <end position="83"/>
    </location>
</feature>
<feature type="strand" evidence="2">
    <location>
        <begin position="88"/>
        <end position="97"/>
    </location>
</feature>
<feature type="helix" evidence="2">
    <location>
        <begin position="99"/>
        <end position="105"/>
    </location>
</feature>
<feature type="strand" evidence="2">
    <location>
        <begin position="112"/>
        <end position="114"/>
    </location>
</feature>
<feature type="strand" evidence="2">
    <location>
        <begin position="119"/>
        <end position="121"/>
    </location>
</feature>
<feature type="strand" evidence="2">
    <location>
        <begin position="129"/>
        <end position="131"/>
    </location>
</feature>
<feature type="strand" evidence="2">
    <location>
        <begin position="133"/>
        <end position="135"/>
    </location>
</feature>
<feature type="helix" evidence="2">
    <location>
        <begin position="140"/>
        <end position="158"/>
    </location>
</feature>
<feature type="helix" evidence="2">
    <location>
        <begin position="162"/>
        <end position="169"/>
    </location>
</feature>
<feature type="helix" evidence="2">
    <location>
        <begin position="177"/>
        <end position="182"/>
    </location>
</feature>
<feature type="strand" evidence="2">
    <location>
        <begin position="187"/>
        <end position="189"/>
    </location>
</feature>
<feature type="strand" evidence="2">
    <location>
        <begin position="191"/>
        <end position="195"/>
    </location>
</feature>
<reference key="1">
    <citation type="journal article" date="1998" name="Science">
        <title>Genome sequence of an obligate intracellular pathogen of humans: Chlamydia trachomatis.</title>
        <authorList>
            <person name="Stephens R.S."/>
            <person name="Kalman S."/>
            <person name="Lammel C.J."/>
            <person name="Fan J."/>
            <person name="Marathe R."/>
            <person name="Aravind L."/>
            <person name="Mitchell W.P."/>
            <person name="Olinger L."/>
            <person name="Tatusov R.L."/>
            <person name="Zhao Q."/>
            <person name="Koonin E.V."/>
            <person name="Davis R.W."/>
        </authorList>
    </citation>
    <scope>NUCLEOTIDE SEQUENCE [LARGE SCALE GENOMIC DNA]</scope>
    <source>
        <strain>ATCC VR-885 / DSM 19411 / UW-3/Cx</strain>
    </source>
</reference>